<proteinExistence type="evidence at protein level"/>
<gene>
    <name type="primary">NDUFB8</name>
</gene>
<protein>
    <recommendedName>
        <fullName>NADH dehydrogenase [ubiquinone] 1 beta subcomplex subunit 8, mitochondrial</fullName>
    </recommendedName>
    <alternativeName>
        <fullName>Complex I-ASHI</fullName>
        <shortName>CI-ASHI</shortName>
    </alternativeName>
    <alternativeName>
        <fullName>NADH-ubiquinone oxidoreductase ASHI subunit</fullName>
    </alternativeName>
</protein>
<name>NDUB8_HUMAN</name>
<dbReference type="EMBL" id="AF044958">
    <property type="protein sequence ID" value="AAD05422.1"/>
    <property type="molecule type" value="mRNA"/>
</dbReference>
<dbReference type="EMBL" id="AF115968">
    <property type="protein sequence ID" value="AAP97239.1"/>
    <property type="molecule type" value="mRNA"/>
</dbReference>
<dbReference type="EMBL" id="AF077028">
    <property type="protein sequence ID" value="AAD27761.1"/>
    <property type="molecule type" value="mRNA"/>
</dbReference>
<dbReference type="EMBL" id="AL080056">
    <property type="protein sequence ID" value="CAB45691.1"/>
    <property type="molecule type" value="mRNA"/>
</dbReference>
<dbReference type="EMBL" id="CR533490">
    <property type="protein sequence ID" value="CAG38521.1"/>
    <property type="molecule type" value="mRNA"/>
</dbReference>
<dbReference type="EMBL" id="AK289579">
    <property type="protein sequence ID" value="BAF82268.1"/>
    <property type="molecule type" value="mRNA"/>
</dbReference>
<dbReference type="EMBL" id="AK295867">
    <property type="protein sequence ID" value="BAG58666.1"/>
    <property type="molecule type" value="mRNA"/>
</dbReference>
<dbReference type="EMBL" id="AL133352">
    <property type="status" value="NOT_ANNOTATED_CDS"/>
    <property type="molecule type" value="Genomic_DNA"/>
</dbReference>
<dbReference type="EMBL" id="CH471066">
    <property type="protein sequence ID" value="EAW49819.1"/>
    <property type="molecule type" value="Genomic_DNA"/>
</dbReference>
<dbReference type="EMBL" id="CH471066">
    <property type="protein sequence ID" value="EAW49820.1"/>
    <property type="molecule type" value="Genomic_DNA"/>
</dbReference>
<dbReference type="EMBL" id="BC000466">
    <property type="protein sequence ID" value="AAH00466.1"/>
    <property type="molecule type" value="mRNA"/>
</dbReference>
<dbReference type="EMBL" id="BC019276">
    <property type="protein sequence ID" value="AAH19276.1"/>
    <property type="molecule type" value="mRNA"/>
</dbReference>
<dbReference type="EMBL" id="BI602529">
    <property type="status" value="NOT_ANNOTATED_CDS"/>
    <property type="molecule type" value="mRNA"/>
</dbReference>
<dbReference type="EMBL" id="Y18944">
    <property type="protein sequence ID" value="CAB46274.1"/>
    <property type="molecule type" value="Genomic_DNA"/>
</dbReference>
<dbReference type="CCDS" id="CCDS65916.1">
    <molecule id="O95169-3"/>
</dbReference>
<dbReference type="CCDS" id="CCDS65917.1">
    <molecule id="O95169-2"/>
</dbReference>
<dbReference type="CCDS" id="CCDS7497.1">
    <molecule id="O95169-1"/>
</dbReference>
<dbReference type="PIR" id="JE0382">
    <property type="entry name" value="JE0382"/>
</dbReference>
<dbReference type="RefSeq" id="NP_001271296.1">
    <molecule id="O95169-2"/>
    <property type="nucleotide sequence ID" value="NM_001284367.2"/>
</dbReference>
<dbReference type="RefSeq" id="NP_001271297.1">
    <molecule id="O95169-3"/>
    <property type="nucleotide sequence ID" value="NM_001284368.1"/>
</dbReference>
<dbReference type="RefSeq" id="NP_004995.1">
    <molecule id="O95169-1"/>
    <property type="nucleotide sequence ID" value="NM_005004.4"/>
</dbReference>
<dbReference type="PDB" id="5XTC">
    <property type="method" value="EM"/>
    <property type="resolution" value="3.70 A"/>
    <property type="chains" value="c=34-186"/>
</dbReference>
<dbReference type="PDB" id="5XTD">
    <property type="method" value="EM"/>
    <property type="resolution" value="3.70 A"/>
    <property type="chains" value="c=34-186"/>
</dbReference>
<dbReference type="PDB" id="5XTH">
    <property type="method" value="EM"/>
    <property type="resolution" value="3.90 A"/>
    <property type="chains" value="c=34-186"/>
</dbReference>
<dbReference type="PDB" id="5XTI">
    <property type="method" value="EM"/>
    <property type="resolution" value="17.40 A"/>
    <property type="chains" value="Bc/c=34-186"/>
</dbReference>
<dbReference type="PDBsum" id="5XTC"/>
<dbReference type="PDBsum" id="5XTD"/>
<dbReference type="PDBsum" id="5XTH"/>
<dbReference type="PDBsum" id="5XTI"/>
<dbReference type="SMR" id="O95169"/>
<dbReference type="BioGRID" id="110794">
    <property type="interactions" value="136"/>
</dbReference>
<dbReference type="ComplexPortal" id="CPX-577">
    <property type="entry name" value="Mitochondrial respiratory chain complex I"/>
</dbReference>
<dbReference type="CORUM" id="O95169"/>
<dbReference type="FunCoup" id="O95169">
    <property type="interactions" value="1316"/>
</dbReference>
<dbReference type="IntAct" id="O95169">
    <property type="interactions" value="79"/>
</dbReference>
<dbReference type="MINT" id="O95169"/>
<dbReference type="STRING" id="9606.ENSP00000299166"/>
<dbReference type="BindingDB" id="O95169"/>
<dbReference type="ChEMBL" id="CHEMBL2363065"/>
<dbReference type="DrugBank" id="DB00157">
    <property type="generic name" value="NADH"/>
</dbReference>
<dbReference type="DrugCentral" id="O95169"/>
<dbReference type="GlyGen" id="O95169">
    <property type="glycosylation" value="2 sites, 1 O-linked glycan (1 site)"/>
</dbReference>
<dbReference type="iPTMnet" id="O95169"/>
<dbReference type="MetOSite" id="O95169"/>
<dbReference type="PhosphoSitePlus" id="O95169"/>
<dbReference type="SwissPalm" id="O95169"/>
<dbReference type="BioMuta" id="NDUFB8"/>
<dbReference type="jPOST" id="O95169"/>
<dbReference type="MassIVE" id="O95169"/>
<dbReference type="PaxDb" id="9606-ENSP00000299166"/>
<dbReference type="PeptideAtlas" id="O95169"/>
<dbReference type="ProteomicsDB" id="50683">
    <molecule id="O95169-1"/>
</dbReference>
<dbReference type="ProteomicsDB" id="65796"/>
<dbReference type="ProteomicsDB" id="65797"/>
<dbReference type="Pumba" id="O95169"/>
<dbReference type="TopDownProteomics" id="O95169-1">
    <molecule id="O95169-1"/>
</dbReference>
<dbReference type="Antibodypedia" id="1271">
    <property type="antibodies" value="104 antibodies from 26 providers"/>
</dbReference>
<dbReference type="DNASU" id="4714"/>
<dbReference type="Ensembl" id="ENST00000299166.9">
    <molecule id="O95169-1"/>
    <property type="protein sequence ID" value="ENSP00000299166.4"/>
    <property type="gene ID" value="ENSG00000166136.17"/>
</dbReference>
<dbReference type="Ensembl" id="ENST00000370320.4">
    <molecule id="O95169-2"/>
    <property type="protein sequence ID" value="ENSP00000359344.4"/>
    <property type="gene ID" value="ENSG00000166136.17"/>
</dbReference>
<dbReference type="Ensembl" id="ENST00000370322.5">
    <molecule id="O95169-3"/>
    <property type="protein sequence ID" value="ENSP00000359346.1"/>
    <property type="gene ID" value="ENSG00000166136.17"/>
</dbReference>
<dbReference type="Ensembl" id="ENST00000718301.1">
    <molecule id="O95169-1"/>
    <property type="protein sequence ID" value="ENSP00000520734.1"/>
    <property type="gene ID" value="ENSG00000166136.17"/>
</dbReference>
<dbReference type="GeneID" id="4714"/>
<dbReference type="KEGG" id="hsa:4714"/>
<dbReference type="MANE-Select" id="ENST00000299166.9">
    <property type="protein sequence ID" value="ENSP00000299166.4"/>
    <property type="RefSeq nucleotide sequence ID" value="NM_005004.4"/>
    <property type="RefSeq protein sequence ID" value="NP_004995.1"/>
</dbReference>
<dbReference type="UCSC" id="uc001kri.3">
    <molecule id="O95169-1"/>
    <property type="organism name" value="human"/>
</dbReference>
<dbReference type="AGR" id="HGNC:7703"/>
<dbReference type="CTD" id="4714"/>
<dbReference type="DisGeNET" id="4714"/>
<dbReference type="GeneCards" id="NDUFB8"/>
<dbReference type="HGNC" id="HGNC:7703">
    <property type="gene designation" value="NDUFB8"/>
</dbReference>
<dbReference type="HPA" id="ENSG00000166136">
    <property type="expression patterns" value="Low tissue specificity"/>
</dbReference>
<dbReference type="MalaCards" id="NDUFB8"/>
<dbReference type="MIM" id="602140">
    <property type="type" value="gene"/>
</dbReference>
<dbReference type="MIM" id="618252">
    <property type="type" value="phenotype"/>
</dbReference>
<dbReference type="neXtProt" id="NX_O95169"/>
<dbReference type="OpenTargets" id="ENSG00000166136"/>
<dbReference type="PharmGKB" id="PA31514"/>
<dbReference type="VEuPathDB" id="HostDB:ENSG00000166136"/>
<dbReference type="eggNOG" id="KOG4040">
    <property type="taxonomic scope" value="Eukaryota"/>
</dbReference>
<dbReference type="GeneTree" id="ENSGT00390000000628"/>
<dbReference type="HOGENOM" id="CLU_108654_1_0_1"/>
<dbReference type="InParanoid" id="O95169"/>
<dbReference type="OMA" id="MEDYEPY"/>
<dbReference type="OrthoDB" id="2014058at2759"/>
<dbReference type="PAN-GO" id="O95169">
    <property type="GO annotations" value="1 GO annotation based on evolutionary models"/>
</dbReference>
<dbReference type="PhylomeDB" id="O95169"/>
<dbReference type="TreeFam" id="TF317319"/>
<dbReference type="BioCyc" id="MetaCyc:HS09335-MONOMER"/>
<dbReference type="PathwayCommons" id="O95169"/>
<dbReference type="Reactome" id="R-HSA-1268020">
    <property type="pathway name" value="Mitochondrial protein import"/>
</dbReference>
<dbReference type="Reactome" id="R-HSA-611105">
    <property type="pathway name" value="Respiratory electron transport"/>
</dbReference>
<dbReference type="Reactome" id="R-HSA-6799198">
    <property type="pathway name" value="Complex I biogenesis"/>
</dbReference>
<dbReference type="SignaLink" id="O95169"/>
<dbReference type="SIGNOR" id="O95169"/>
<dbReference type="BioGRID-ORCS" id="4714">
    <property type="hits" value="311 hits in 1163 CRISPR screens"/>
</dbReference>
<dbReference type="CD-CODE" id="FB4E32DD">
    <property type="entry name" value="Presynaptic clusters and postsynaptic densities"/>
</dbReference>
<dbReference type="ChiTaRS" id="NDUFB8">
    <property type="organism name" value="human"/>
</dbReference>
<dbReference type="GeneWiki" id="NDUFB8"/>
<dbReference type="GenomeRNAi" id="4714"/>
<dbReference type="Pharos" id="O95169">
    <property type="development level" value="Tclin"/>
</dbReference>
<dbReference type="PRO" id="PR:O95169"/>
<dbReference type="Proteomes" id="UP000005640">
    <property type="component" value="Chromosome 10"/>
</dbReference>
<dbReference type="RNAct" id="O95169">
    <property type="molecule type" value="protein"/>
</dbReference>
<dbReference type="Bgee" id="ENSG00000166136">
    <property type="expression patterns" value="Expressed in endothelial cell and 217 other cell types or tissues"/>
</dbReference>
<dbReference type="ExpressionAtlas" id="O95169">
    <property type="expression patterns" value="baseline and differential"/>
</dbReference>
<dbReference type="GO" id="GO:0005743">
    <property type="term" value="C:mitochondrial inner membrane"/>
    <property type="evidence" value="ECO:0000314"/>
    <property type="project" value="ComplexPortal"/>
</dbReference>
<dbReference type="GO" id="GO:0005759">
    <property type="term" value="C:mitochondrial matrix"/>
    <property type="evidence" value="ECO:0000304"/>
    <property type="project" value="Reactome"/>
</dbReference>
<dbReference type="GO" id="GO:0005739">
    <property type="term" value="C:mitochondrion"/>
    <property type="evidence" value="ECO:0000314"/>
    <property type="project" value="HPA"/>
</dbReference>
<dbReference type="GO" id="GO:0045271">
    <property type="term" value="C:respiratory chain complex I"/>
    <property type="evidence" value="ECO:0000314"/>
    <property type="project" value="UniProtKB"/>
</dbReference>
<dbReference type="GO" id="GO:0008137">
    <property type="term" value="F:NADH dehydrogenase (ubiquinone) activity"/>
    <property type="evidence" value="ECO:0000303"/>
    <property type="project" value="UniProtKB"/>
</dbReference>
<dbReference type="GO" id="GO:0009060">
    <property type="term" value="P:aerobic respiration"/>
    <property type="evidence" value="ECO:0000303"/>
    <property type="project" value="ComplexPortal"/>
</dbReference>
<dbReference type="GO" id="GO:0006120">
    <property type="term" value="P:mitochondrial electron transport, NADH to ubiquinone"/>
    <property type="evidence" value="ECO:0000303"/>
    <property type="project" value="UniProtKB"/>
</dbReference>
<dbReference type="GO" id="GO:0042776">
    <property type="term" value="P:proton motive force-driven mitochondrial ATP synthesis"/>
    <property type="evidence" value="ECO:0000303"/>
    <property type="project" value="ComplexPortal"/>
</dbReference>
<dbReference type="InterPro" id="IPR008699">
    <property type="entry name" value="NDUFB8"/>
</dbReference>
<dbReference type="InterPro" id="IPR016551">
    <property type="entry name" value="Ndufb8_metazoa"/>
</dbReference>
<dbReference type="PANTHER" id="PTHR12840:SF2">
    <property type="entry name" value="NADH DEHYDROGENASE [UBIQUINONE] 1 BETA SUBCOMPLEX SUBUNIT 8, MITOCHONDRIAL"/>
    <property type="match status" value="1"/>
</dbReference>
<dbReference type="PANTHER" id="PTHR12840">
    <property type="entry name" value="NADH-UBIQUINONE OXIDOREDUCTASE ASHI SUBUNIT"/>
    <property type="match status" value="1"/>
</dbReference>
<dbReference type="Pfam" id="PF05821">
    <property type="entry name" value="NDUF_B8"/>
    <property type="match status" value="1"/>
</dbReference>
<dbReference type="PIRSF" id="PIRSF009288">
    <property type="entry name" value="NDUB8"/>
    <property type="match status" value="1"/>
</dbReference>
<organism>
    <name type="scientific">Homo sapiens</name>
    <name type="common">Human</name>
    <dbReference type="NCBI Taxonomy" id="9606"/>
    <lineage>
        <taxon>Eukaryota</taxon>
        <taxon>Metazoa</taxon>
        <taxon>Chordata</taxon>
        <taxon>Craniata</taxon>
        <taxon>Vertebrata</taxon>
        <taxon>Euteleostomi</taxon>
        <taxon>Mammalia</taxon>
        <taxon>Eutheria</taxon>
        <taxon>Euarchontoglires</taxon>
        <taxon>Primates</taxon>
        <taxon>Haplorrhini</taxon>
        <taxon>Catarrhini</taxon>
        <taxon>Hominidae</taxon>
        <taxon>Homo</taxon>
    </lineage>
</organism>
<reference key="1">
    <citation type="journal article" date="1998" name="Biochem. Biophys. Res. Commun.">
        <title>cDNA of eight nuclear encoded subunits of NADH:ubiquinone oxidoreductase: human complex I cDNA characterization completed.</title>
        <authorList>
            <person name="Loeffen J.L.C.M."/>
            <person name="Triepels R.H."/>
            <person name="van den Heuvel L.P."/>
            <person name="Schuelke M."/>
            <person name="Buskens C.A.F."/>
            <person name="Smeets R.J.P."/>
            <person name="Trijbels J.M.F."/>
            <person name="Smeitink J.A.M."/>
        </authorList>
    </citation>
    <scope>NUCLEOTIDE SEQUENCE [MRNA] (ISOFORM 1)</scope>
</reference>
<reference key="2">
    <citation type="submission" date="2003-07" db="EMBL/GenBank/DDBJ databases">
        <title>Cloning and sequencing of a novel human cDNA homologous to Bos taurus CI-ASHI mRNA.</title>
        <authorList>
            <person name="Ge H.P."/>
            <person name="Yu L."/>
            <person name="Jin L."/>
            <person name="Fu Q."/>
            <person name="Wang X.K."/>
            <person name="Zhao S.Y."/>
        </authorList>
    </citation>
    <scope>NUCLEOTIDE SEQUENCE [MRNA] (ISOFORM 1)</scope>
</reference>
<reference key="3">
    <citation type="journal article" date="2000" name="Genome Res.">
        <title>Cloning and functional analysis of cDNAs with open reading frames for 300 previously undefined genes expressed in CD34+ hematopoietic stem/progenitor cells.</title>
        <authorList>
            <person name="Zhang Q.-H."/>
            <person name="Ye M."/>
            <person name="Wu X.-Y."/>
            <person name="Ren S.-X."/>
            <person name="Zhao M."/>
            <person name="Zhao C.-J."/>
            <person name="Fu G."/>
            <person name="Shen Y."/>
            <person name="Fan H.-Y."/>
            <person name="Lu G."/>
            <person name="Zhong M."/>
            <person name="Xu X.-R."/>
            <person name="Han Z.-G."/>
            <person name="Zhang J.-W."/>
            <person name="Tao J."/>
            <person name="Huang Q.-H."/>
            <person name="Zhou J."/>
            <person name="Hu G.-X."/>
            <person name="Gu J."/>
            <person name="Chen S.-J."/>
            <person name="Chen Z."/>
        </authorList>
    </citation>
    <scope>NUCLEOTIDE SEQUENCE [LARGE SCALE MRNA] (ISOFORM 1)</scope>
    <source>
        <tissue>Umbilical cord blood</tissue>
    </source>
</reference>
<reference key="4">
    <citation type="journal article" date="2001" name="Genome Res.">
        <title>Towards a catalog of human genes and proteins: sequencing and analysis of 500 novel complete protein coding human cDNAs.</title>
        <authorList>
            <person name="Wiemann S."/>
            <person name="Weil B."/>
            <person name="Wellenreuther R."/>
            <person name="Gassenhuber J."/>
            <person name="Glassl S."/>
            <person name="Ansorge W."/>
            <person name="Boecher M."/>
            <person name="Bloecker H."/>
            <person name="Bauersachs S."/>
            <person name="Blum H."/>
            <person name="Lauber J."/>
            <person name="Duesterhoeft A."/>
            <person name="Beyer A."/>
            <person name="Koehrer K."/>
            <person name="Strack N."/>
            <person name="Mewes H.-W."/>
            <person name="Ottenwaelder B."/>
            <person name="Obermaier B."/>
            <person name="Tampe J."/>
            <person name="Heubner D."/>
            <person name="Wambutt R."/>
            <person name="Korn B."/>
            <person name="Klein M."/>
            <person name="Poustka A."/>
        </authorList>
    </citation>
    <scope>NUCLEOTIDE SEQUENCE [LARGE SCALE MRNA] (ISOFORM 1)</scope>
    <source>
        <tissue>Brain</tissue>
    </source>
</reference>
<reference key="5">
    <citation type="submission" date="2004-06" db="EMBL/GenBank/DDBJ databases">
        <title>Cloning of human full open reading frames in Gateway(TM) system entry vector (pDONR201).</title>
        <authorList>
            <person name="Ebert L."/>
            <person name="Schick M."/>
            <person name="Neubert P."/>
            <person name="Schatten R."/>
            <person name="Henze S."/>
            <person name="Korn B."/>
        </authorList>
    </citation>
    <scope>NUCLEOTIDE SEQUENCE [LARGE SCALE MRNA] (ISOFORM 1)</scope>
</reference>
<reference key="6">
    <citation type="journal article" date="2004" name="Nat. Genet.">
        <title>Complete sequencing and characterization of 21,243 full-length human cDNAs.</title>
        <authorList>
            <person name="Ota T."/>
            <person name="Suzuki Y."/>
            <person name="Nishikawa T."/>
            <person name="Otsuki T."/>
            <person name="Sugiyama T."/>
            <person name="Irie R."/>
            <person name="Wakamatsu A."/>
            <person name="Hayashi K."/>
            <person name="Sato H."/>
            <person name="Nagai K."/>
            <person name="Kimura K."/>
            <person name="Makita H."/>
            <person name="Sekine M."/>
            <person name="Obayashi M."/>
            <person name="Nishi T."/>
            <person name="Shibahara T."/>
            <person name="Tanaka T."/>
            <person name="Ishii S."/>
            <person name="Yamamoto J."/>
            <person name="Saito K."/>
            <person name="Kawai Y."/>
            <person name="Isono Y."/>
            <person name="Nakamura Y."/>
            <person name="Nagahari K."/>
            <person name="Murakami K."/>
            <person name="Yasuda T."/>
            <person name="Iwayanagi T."/>
            <person name="Wagatsuma M."/>
            <person name="Shiratori A."/>
            <person name="Sudo H."/>
            <person name="Hosoiri T."/>
            <person name="Kaku Y."/>
            <person name="Kodaira H."/>
            <person name="Kondo H."/>
            <person name="Sugawara M."/>
            <person name="Takahashi M."/>
            <person name="Kanda K."/>
            <person name="Yokoi T."/>
            <person name="Furuya T."/>
            <person name="Kikkawa E."/>
            <person name="Omura Y."/>
            <person name="Abe K."/>
            <person name="Kamihara K."/>
            <person name="Katsuta N."/>
            <person name="Sato K."/>
            <person name="Tanikawa M."/>
            <person name="Yamazaki M."/>
            <person name="Ninomiya K."/>
            <person name="Ishibashi T."/>
            <person name="Yamashita H."/>
            <person name="Murakawa K."/>
            <person name="Fujimori K."/>
            <person name="Tanai H."/>
            <person name="Kimata M."/>
            <person name="Watanabe M."/>
            <person name="Hiraoka S."/>
            <person name="Chiba Y."/>
            <person name="Ishida S."/>
            <person name="Ono Y."/>
            <person name="Takiguchi S."/>
            <person name="Watanabe S."/>
            <person name="Yosida M."/>
            <person name="Hotuta T."/>
            <person name="Kusano J."/>
            <person name="Kanehori K."/>
            <person name="Takahashi-Fujii A."/>
            <person name="Hara H."/>
            <person name="Tanase T.-O."/>
            <person name="Nomura Y."/>
            <person name="Togiya S."/>
            <person name="Komai F."/>
            <person name="Hara R."/>
            <person name="Takeuchi K."/>
            <person name="Arita M."/>
            <person name="Imose N."/>
            <person name="Musashino K."/>
            <person name="Yuuki H."/>
            <person name="Oshima A."/>
            <person name="Sasaki N."/>
            <person name="Aotsuka S."/>
            <person name="Yoshikawa Y."/>
            <person name="Matsunawa H."/>
            <person name="Ichihara T."/>
            <person name="Shiohata N."/>
            <person name="Sano S."/>
            <person name="Moriya S."/>
            <person name="Momiyama H."/>
            <person name="Satoh N."/>
            <person name="Takami S."/>
            <person name="Terashima Y."/>
            <person name="Suzuki O."/>
            <person name="Nakagawa S."/>
            <person name="Senoh A."/>
            <person name="Mizoguchi H."/>
            <person name="Goto Y."/>
            <person name="Shimizu F."/>
            <person name="Wakebe H."/>
            <person name="Hishigaki H."/>
            <person name="Watanabe T."/>
            <person name="Sugiyama A."/>
            <person name="Takemoto M."/>
            <person name="Kawakami B."/>
            <person name="Yamazaki M."/>
            <person name="Watanabe K."/>
            <person name="Kumagai A."/>
            <person name="Itakura S."/>
            <person name="Fukuzumi Y."/>
            <person name="Fujimori Y."/>
            <person name="Komiyama M."/>
            <person name="Tashiro H."/>
            <person name="Tanigami A."/>
            <person name="Fujiwara T."/>
            <person name="Ono T."/>
            <person name="Yamada K."/>
            <person name="Fujii Y."/>
            <person name="Ozaki K."/>
            <person name="Hirao M."/>
            <person name="Ohmori Y."/>
            <person name="Kawabata A."/>
            <person name="Hikiji T."/>
            <person name="Kobatake N."/>
            <person name="Inagaki H."/>
            <person name="Ikema Y."/>
            <person name="Okamoto S."/>
            <person name="Okitani R."/>
            <person name="Kawakami T."/>
            <person name="Noguchi S."/>
            <person name="Itoh T."/>
            <person name="Shigeta K."/>
            <person name="Senba T."/>
            <person name="Matsumura K."/>
            <person name="Nakajima Y."/>
            <person name="Mizuno T."/>
            <person name="Morinaga M."/>
            <person name="Sasaki M."/>
            <person name="Togashi T."/>
            <person name="Oyama M."/>
            <person name="Hata H."/>
            <person name="Watanabe M."/>
            <person name="Komatsu T."/>
            <person name="Mizushima-Sugano J."/>
            <person name="Satoh T."/>
            <person name="Shirai Y."/>
            <person name="Takahashi Y."/>
            <person name="Nakagawa K."/>
            <person name="Okumura K."/>
            <person name="Nagase T."/>
            <person name="Nomura N."/>
            <person name="Kikuchi H."/>
            <person name="Masuho Y."/>
            <person name="Yamashita R."/>
            <person name="Nakai K."/>
            <person name="Yada T."/>
            <person name="Nakamura Y."/>
            <person name="Ohara O."/>
            <person name="Isogai T."/>
            <person name="Sugano S."/>
        </authorList>
    </citation>
    <scope>NUCLEOTIDE SEQUENCE [LARGE SCALE MRNA] (ISOFORMS 1 AND 2)</scope>
    <source>
        <tissue>Cerebellum</tissue>
    </source>
</reference>
<reference key="7">
    <citation type="journal article" date="2004" name="Nature">
        <title>The DNA sequence and comparative analysis of human chromosome 10.</title>
        <authorList>
            <person name="Deloukas P."/>
            <person name="Earthrowl M.E."/>
            <person name="Grafham D.V."/>
            <person name="Rubenfield M."/>
            <person name="French L."/>
            <person name="Steward C.A."/>
            <person name="Sims S.K."/>
            <person name="Jones M.C."/>
            <person name="Searle S."/>
            <person name="Scott C."/>
            <person name="Howe K."/>
            <person name="Hunt S.E."/>
            <person name="Andrews T.D."/>
            <person name="Gilbert J.G.R."/>
            <person name="Swarbreck D."/>
            <person name="Ashurst J.L."/>
            <person name="Taylor A."/>
            <person name="Battles J."/>
            <person name="Bird C.P."/>
            <person name="Ainscough R."/>
            <person name="Almeida J.P."/>
            <person name="Ashwell R.I.S."/>
            <person name="Ambrose K.D."/>
            <person name="Babbage A.K."/>
            <person name="Bagguley C.L."/>
            <person name="Bailey J."/>
            <person name="Banerjee R."/>
            <person name="Bates K."/>
            <person name="Beasley H."/>
            <person name="Bray-Allen S."/>
            <person name="Brown A.J."/>
            <person name="Brown J.Y."/>
            <person name="Burford D.C."/>
            <person name="Burrill W."/>
            <person name="Burton J."/>
            <person name="Cahill P."/>
            <person name="Camire D."/>
            <person name="Carter N.P."/>
            <person name="Chapman J.C."/>
            <person name="Clark S.Y."/>
            <person name="Clarke G."/>
            <person name="Clee C.M."/>
            <person name="Clegg S."/>
            <person name="Corby N."/>
            <person name="Coulson A."/>
            <person name="Dhami P."/>
            <person name="Dutta I."/>
            <person name="Dunn M."/>
            <person name="Faulkner L."/>
            <person name="Frankish A."/>
            <person name="Frankland J.A."/>
            <person name="Garner P."/>
            <person name="Garnett J."/>
            <person name="Gribble S."/>
            <person name="Griffiths C."/>
            <person name="Grocock R."/>
            <person name="Gustafson E."/>
            <person name="Hammond S."/>
            <person name="Harley J.L."/>
            <person name="Hart E."/>
            <person name="Heath P.D."/>
            <person name="Ho T.P."/>
            <person name="Hopkins B."/>
            <person name="Horne J."/>
            <person name="Howden P.J."/>
            <person name="Huckle E."/>
            <person name="Hynds C."/>
            <person name="Johnson C."/>
            <person name="Johnson D."/>
            <person name="Kana A."/>
            <person name="Kay M."/>
            <person name="Kimberley A.M."/>
            <person name="Kershaw J.K."/>
            <person name="Kokkinaki M."/>
            <person name="Laird G.K."/>
            <person name="Lawlor S."/>
            <person name="Lee H.M."/>
            <person name="Leongamornlert D.A."/>
            <person name="Laird G."/>
            <person name="Lloyd C."/>
            <person name="Lloyd D.M."/>
            <person name="Loveland J."/>
            <person name="Lovell J."/>
            <person name="McLaren S."/>
            <person name="McLay K.E."/>
            <person name="McMurray A."/>
            <person name="Mashreghi-Mohammadi M."/>
            <person name="Matthews L."/>
            <person name="Milne S."/>
            <person name="Nickerson T."/>
            <person name="Nguyen M."/>
            <person name="Overton-Larty E."/>
            <person name="Palmer S.A."/>
            <person name="Pearce A.V."/>
            <person name="Peck A.I."/>
            <person name="Pelan S."/>
            <person name="Phillimore B."/>
            <person name="Porter K."/>
            <person name="Rice C.M."/>
            <person name="Rogosin A."/>
            <person name="Ross M.T."/>
            <person name="Sarafidou T."/>
            <person name="Sehra H.K."/>
            <person name="Shownkeen R."/>
            <person name="Skuce C.D."/>
            <person name="Smith M."/>
            <person name="Standring L."/>
            <person name="Sycamore N."/>
            <person name="Tester J."/>
            <person name="Thorpe A."/>
            <person name="Torcasso W."/>
            <person name="Tracey A."/>
            <person name="Tromans A."/>
            <person name="Tsolas J."/>
            <person name="Wall M."/>
            <person name="Walsh J."/>
            <person name="Wang H."/>
            <person name="Weinstock K."/>
            <person name="West A.P."/>
            <person name="Willey D.L."/>
            <person name="Whitehead S.L."/>
            <person name="Wilming L."/>
            <person name="Wray P.W."/>
            <person name="Young L."/>
            <person name="Chen Y."/>
            <person name="Lovering R.C."/>
            <person name="Moschonas N.K."/>
            <person name="Siebert R."/>
            <person name="Fechtel K."/>
            <person name="Bentley D."/>
            <person name="Durbin R.M."/>
            <person name="Hubbard T."/>
            <person name="Doucette-Stamm L."/>
            <person name="Beck S."/>
            <person name="Smith D.R."/>
            <person name="Rogers J."/>
        </authorList>
    </citation>
    <scope>NUCLEOTIDE SEQUENCE [LARGE SCALE GENOMIC DNA]</scope>
</reference>
<reference key="8">
    <citation type="submission" date="2005-09" db="EMBL/GenBank/DDBJ databases">
        <authorList>
            <person name="Mural R.J."/>
            <person name="Istrail S."/>
            <person name="Sutton G.G."/>
            <person name="Florea L."/>
            <person name="Halpern A.L."/>
            <person name="Mobarry C.M."/>
            <person name="Lippert R."/>
            <person name="Walenz B."/>
            <person name="Shatkay H."/>
            <person name="Dew I."/>
            <person name="Miller J.R."/>
            <person name="Flanigan M.J."/>
            <person name="Edwards N.J."/>
            <person name="Bolanos R."/>
            <person name="Fasulo D."/>
            <person name="Halldorsson B.V."/>
            <person name="Hannenhalli S."/>
            <person name="Turner R."/>
            <person name="Yooseph S."/>
            <person name="Lu F."/>
            <person name="Nusskern D.R."/>
            <person name="Shue B.C."/>
            <person name="Zheng X.H."/>
            <person name="Zhong F."/>
            <person name="Delcher A.L."/>
            <person name="Huson D.H."/>
            <person name="Kravitz S.A."/>
            <person name="Mouchard L."/>
            <person name="Reinert K."/>
            <person name="Remington K.A."/>
            <person name="Clark A.G."/>
            <person name="Waterman M.S."/>
            <person name="Eichler E.E."/>
            <person name="Adams M.D."/>
            <person name="Hunkapiller M.W."/>
            <person name="Myers E.W."/>
            <person name="Venter J.C."/>
        </authorList>
    </citation>
    <scope>NUCLEOTIDE SEQUENCE [LARGE SCALE GENOMIC DNA]</scope>
</reference>
<reference key="9">
    <citation type="journal article" date="2004" name="Genome Res.">
        <title>The status, quality, and expansion of the NIH full-length cDNA project: the Mammalian Gene Collection (MGC).</title>
        <authorList>
            <consortium name="The MGC Project Team"/>
        </authorList>
    </citation>
    <scope>NUCLEOTIDE SEQUENCE [LARGE SCALE MRNA] (ISOFORMS 1 AND 3)</scope>
    <source>
        <tissue>Lung</tissue>
    </source>
</reference>
<reference key="10">
    <citation type="journal article" date="1999" name="Gene">
        <title>Identification of 167 polymorphisms in 88 genes from candidate neurodegeneration pathways.</title>
        <authorList>
            <person name="Emahazion T."/>
            <person name="Jobs M."/>
            <person name="Howell W.M."/>
            <person name="Siegfried M."/>
            <person name="Wyoni P.I."/>
            <person name="Prince J.A."/>
            <person name="Brookes J.A."/>
        </authorList>
    </citation>
    <scope>NUCLEOTIDE SEQUENCE [GENOMIC DNA] OF 29-71</scope>
    <source>
        <tissue>Blood</tissue>
    </source>
</reference>
<reference key="11">
    <citation type="journal article" date="2003" name="J. Biol. Chem.">
        <title>The subunit composition of the human NADH dehydrogenase obtained by rapid one-step immunopurification.</title>
        <authorList>
            <person name="Murray J."/>
            <person name="Zhang B."/>
            <person name="Taylor S.W."/>
            <person name="Oglesbee D."/>
            <person name="Fahy E."/>
            <person name="Marusich M.F."/>
            <person name="Ghosh S.S."/>
            <person name="Capaldi R.A."/>
        </authorList>
    </citation>
    <scope>IDENTIFICATION IN THE NADH-UBIQUINONE OXIDOREDUCTASE COMPLEX</scope>
    <scope>IDENTIFICATION BY MASS SPECTROMETRY</scope>
    <scope>SUBCELLULAR LOCATION</scope>
</reference>
<reference key="12">
    <citation type="journal article" date="2011" name="BMC Syst. Biol.">
        <title>Initial characterization of the human central proteome.</title>
        <authorList>
            <person name="Burkard T.R."/>
            <person name="Planyavsky M."/>
            <person name="Kaupe I."/>
            <person name="Breitwieser F.P."/>
            <person name="Buerckstuemmer T."/>
            <person name="Bennett K.L."/>
            <person name="Superti-Furga G."/>
            <person name="Colinge J."/>
        </authorList>
    </citation>
    <scope>IDENTIFICATION BY MASS SPECTROMETRY [LARGE SCALE ANALYSIS]</scope>
</reference>
<reference key="13">
    <citation type="journal article" date="2016" name="Nature">
        <title>Accessory subunits are integral for assembly and function of human mitochondrial complex I.</title>
        <authorList>
            <person name="Stroud D.A."/>
            <person name="Surgenor E.E."/>
            <person name="Formosa L.E."/>
            <person name="Reljic B."/>
            <person name="Frazier A.E."/>
            <person name="Dibley M.G."/>
            <person name="Osellame L.D."/>
            <person name="Stait T."/>
            <person name="Beilharz T.H."/>
            <person name="Thorburn D.R."/>
            <person name="Salim A."/>
            <person name="Ryan M.T."/>
        </authorList>
    </citation>
    <scope>FUNCTION</scope>
    <scope>IDENTIFICATION IN THE NADH-UBIQUINONE OXIDOREDUCTASE COMPLEX</scope>
</reference>
<reference key="14">
    <citation type="journal article" date="2018" name="Am. J. Hum. Genet.">
        <title>NDUFB8 Mutations Cause Mitochondrial Complex I Deficiency in Individuals with Leigh-like Encephalomyopathy.</title>
        <authorList>
            <person name="Piekutowska-Abramczuk D."/>
            <person name="Assouline Z."/>
            <person name="Matakovic L."/>
            <person name="Feichtinger R.G."/>
            <person name="Konarikova E."/>
            <person name="Jurkiewicz E."/>
            <person name="Stawinski P."/>
            <person name="Gusic M."/>
            <person name="Koller A."/>
            <person name="Pollak A."/>
            <person name="Gasperowicz P."/>
            <person name="Trubicka J."/>
            <person name="Ciara E."/>
            <person name="Iwanicka-Pronicka K."/>
            <person name="Rokicki D."/>
            <person name="Hanein S."/>
            <person name="Wortmann S.B."/>
            <person name="Sperl W."/>
            <person name="Roetig A."/>
            <person name="Prokisch H."/>
            <person name="Pronicka E."/>
            <person name="Ploski R."/>
            <person name="Barcia G."/>
            <person name="Mayr J.A."/>
        </authorList>
    </citation>
    <scope>INVOLVEMENT IN MC1DN32</scope>
    <scope>VARIANTS MC1DN32 HIS-62; GLN-76; 105-MET--VAL-156 DEL AND TRP-144</scope>
</reference>
<evidence type="ECO:0000250" key="1"/>
<evidence type="ECO:0000255" key="2"/>
<evidence type="ECO:0000269" key="3">
    <source>
    </source>
</evidence>
<evidence type="ECO:0000269" key="4">
    <source>
    </source>
</evidence>
<evidence type="ECO:0000269" key="5">
    <source>
    </source>
</evidence>
<evidence type="ECO:0000303" key="6">
    <source>
    </source>
</evidence>
<evidence type="ECO:0000303" key="7">
    <source>
    </source>
</evidence>
<evidence type="ECO:0000305" key="8"/>
<evidence type="ECO:0000305" key="9">
    <source>
    </source>
</evidence>
<keyword id="KW-0002">3D-structure</keyword>
<keyword id="KW-0025">Alternative splicing</keyword>
<keyword id="KW-0225">Disease variant</keyword>
<keyword id="KW-0249">Electron transport</keyword>
<keyword id="KW-0472">Membrane</keyword>
<keyword id="KW-0496">Mitochondrion</keyword>
<keyword id="KW-0999">Mitochondrion inner membrane</keyword>
<keyword id="KW-1274">Primary mitochondrial disease</keyword>
<keyword id="KW-1267">Proteomics identification</keyword>
<keyword id="KW-1185">Reference proteome</keyword>
<keyword id="KW-0679">Respiratory chain</keyword>
<keyword id="KW-0809">Transit peptide</keyword>
<keyword id="KW-0812">Transmembrane</keyword>
<keyword id="KW-1133">Transmembrane helix</keyword>
<keyword id="KW-0813">Transport</keyword>
<accession>O95169</accession>
<accession>A8K0L4</accession>
<accession>Q5W143</accession>
<accession>Q5W144</accession>
<accession>Q5W145</accession>
<accession>Q9UG53</accession>
<accession>Q9UJR4</accession>
<accession>Q9UQF3</accession>
<sequence length="186" mass="21766">MAVARAGVLGVQWLQRASRNVMPLGARTASHMTKDMFPGPYPRTPEERAAAAKKYNMRVEDYEPYPDDGMGYGDYPKLPDRSQHERDPWYSWDQPGLRLNWGEPMHWHLDMYNRNRVDTSPTPVSWHVMCMQLFGFLAFMIFMCWVGDVYPVYQPVGPKQYPYNNLYLERGGDPSKEPERVVHYEI</sequence>
<comment type="function">
    <text evidence="4">Accessory subunit of the mitochondrial membrane respiratory chain NADH dehydrogenase (Complex I), that is believed not to be involved in catalysis. Complex I functions in the transfer of electrons from NADH to the respiratory chain. The immediate electron acceptor for the enzyme is believed to be ubiquinone.</text>
</comment>
<comment type="subunit">
    <text evidence="3 4">Complex I is composed of 45 different subunits.</text>
</comment>
<comment type="subcellular location">
    <subcellularLocation>
        <location evidence="9">Mitochondrion inner membrane</location>
        <topology evidence="2">Single-pass membrane protein</topology>
        <orientation evidence="8">Matrix side</orientation>
    </subcellularLocation>
</comment>
<comment type="alternative products">
    <event type="alternative splicing"/>
    <isoform>
        <id>O95169-1</id>
        <name>1</name>
        <sequence type="displayed"/>
    </isoform>
    <isoform>
        <id>O95169-2</id>
        <name>2</name>
        <sequence type="described" ref="VSP_054843 VSP_054844"/>
    </isoform>
    <isoform>
        <id>O95169-3</id>
        <name>3</name>
        <sequence type="described" ref="VSP_054842"/>
    </isoform>
</comment>
<comment type="disease" evidence="5">
    <disease id="DI-05427">
        <name>Mitochondrial complex I deficiency, nuclear type 32</name>
        <acronym>MC1DN32</acronym>
        <description>A form of mitochondrial complex I deficiency, the most common biochemical signature of mitochondrial disorders, a group of highly heterogeneous conditions characterized by defective oxidative phosphorylation, which collectively affects 1 in 5-10000 live births. Clinical disorders have variable severity, ranging from lethal neonatal disease to adult-onset neurodegenerative disorders. Phenotypes include macrocephaly with progressive leukodystrophy, non-specific encephalopathy, cardiomyopathy, myopathy, liver disease, Leigh syndrome, Leber hereditary optic neuropathy, and some forms of Parkinson disease. MC1DN32 transmission pattern is consistent with autosomal recessive inheritance.</description>
        <dbReference type="MIM" id="618252"/>
    </disease>
    <text>The disease is caused by variants affecting the gene represented in this entry.</text>
</comment>
<comment type="similarity">
    <text evidence="8">Belongs to the complex I NDUFB8 subunit family.</text>
</comment>
<feature type="transit peptide" description="Mitochondrion" evidence="1">
    <location>
        <begin position="1"/>
        <end position="28"/>
    </location>
</feature>
<feature type="chain" id="PRO_0000020046" description="NADH dehydrogenase [ubiquinone] 1 beta subcomplex subunit 8, mitochondrial">
    <location>
        <begin position="29"/>
        <end position="186"/>
    </location>
</feature>
<feature type="transmembrane region" description="Helical" evidence="2">
    <location>
        <begin position="133"/>
        <end position="153"/>
    </location>
</feature>
<feature type="splice variant" id="VSP_054842" description="In isoform 3." evidence="7">
    <location>
        <begin position="1"/>
        <end position="31"/>
    </location>
</feature>
<feature type="splice variant" id="VSP_054843" description="In isoform 2." evidence="6">
    <original>GPKQYPYNNLYLERGG</original>
    <variation>CRHHFSYNLGFLSALG</variation>
    <location>
        <begin position="157"/>
        <end position="172"/>
    </location>
</feature>
<feature type="splice variant" id="VSP_054844" description="In isoform 2." evidence="6">
    <location>
        <begin position="173"/>
        <end position="186"/>
    </location>
</feature>
<feature type="sequence variant" id="VAR_081466" description="In MC1DN32; dbSNP:rs1554843434." evidence="5">
    <original>Y</original>
    <variation>H</variation>
    <location>
        <position position="62"/>
    </location>
</feature>
<feature type="sequence variant" id="VAR_081467" description="In MC1DN32; dbSNP:rs1239013578." evidence="5">
    <original>P</original>
    <variation>Q</variation>
    <location>
        <position position="76"/>
    </location>
</feature>
<feature type="sequence variant" id="VAR_081468" description="In MC1DN32; due to a nucleotide substitution that results in exon 4 skipping or in missense variant W-144; patient cells contain both type of transcripts; transcript lacking exon 4 is the most abundant." evidence="5">
    <location>
        <begin position="105"/>
        <end position="156"/>
    </location>
</feature>
<feature type="sequence variant" id="VAR_081469" description="In MC1DN32; due to a nucleotide substitution that results in exon 4 skipping or missense variant W-144; patient cells contain both type of transcripts; transcript with the missense variant is the less abundant; dbSNP:rs1554843251." evidence="5">
    <original>C</original>
    <variation>W</variation>
    <location>
        <position position="144"/>
    </location>
</feature>
<feature type="sequence conflict" description="In Ref. 4; CAB45691 and 5; CAG38521." evidence="8" ref="4 5">
    <original>T</original>
    <variation>I</variation>
    <location>
        <position position="44"/>
    </location>
</feature>
<feature type="sequence conflict" description="In Ref. 3; AAD27761." evidence="8" ref="3">
    <original>G</original>
    <variation>S</variation>
    <location>
        <position position="171"/>
    </location>
</feature>
<feature type="sequence conflict" description="In Ref. 4; CAB45691 and 5; CAG38521." evidence="8" ref="4 5">
    <original>Y</original>
    <variation>N</variation>
    <location>
        <position position="184"/>
    </location>
</feature>